<organism>
    <name type="scientific">Saccharolobus islandicus (strain Y.N.15.51 / Yellowstone #2)</name>
    <name type="common">Sulfolobus islandicus</name>
    <dbReference type="NCBI Taxonomy" id="419942"/>
    <lineage>
        <taxon>Archaea</taxon>
        <taxon>Thermoproteota</taxon>
        <taxon>Thermoprotei</taxon>
        <taxon>Sulfolobales</taxon>
        <taxon>Sulfolobaceae</taxon>
        <taxon>Saccharolobus</taxon>
    </lineage>
</organism>
<comment type="function">
    <text evidence="1">Component of the A-type ATP synthase that produces ATP from ADP in the presence of a proton gradient across the membrane.</text>
</comment>
<comment type="subunit">
    <text evidence="1">Has multiple subunits with at least A(3), B(3), C, D, E, F, H, I and proteolipid K(x).</text>
</comment>
<comment type="subcellular location">
    <subcellularLocation>
        <location evidence="1">Cell membrane</location>
        <topology evidence="1">Peripheral membrane protein</topology>
    </subcellularLocation>
</comment>
<comment type="similarity">
    <text evidence="1">Belongs to the V-ATPase D subunit family.</text>
</comment>
<reference key="1">
    <citation type="journal article" date="2009" name="Proc. Natl. Acad. Sci. U.S.A.">
        <title>Biogeography of the Sulfolobus islandicus pan-genome.</title>
        <authorList>
            <person name="Reno M.L."/>
            <person name="Held N.L."/>
            <person name="Fields C.J."/>
            <person name="Burke P.V."/>
            <person name="Whitaker R.J."/>
        </authorList>
    </citation>
    <scope>NUCLEOTIDE SEQUENCE [LARGE SCALE GENOMIC DNA]</scope>
    <source>
        <strain>Y.N.15.51 / Yellowstone #2</strain>
    </source>
</reference>
<protein>
    <recommendedName>
        <fullName evidence="1">A-type ATP synthase subunit D</fullName>
    </recommendedName>
</protein>
<evidence type="ECO:0000255" key="1">
    <source>
        <dbReference type="HAMAP-Rule" id="MF_00271"/>
    </source>
</evidence>
<sequence length="213" mass="24987">MSQKVLPTKINLIQFRRQLRLITVIKRLLENKREVLLLYLRTYASEYEKIYNEVNEEMKKVYESYLQAVASEGISNIEEIALSQKPSLEVSSSIKVIFGVKVPTIKLDKSTIPSKPFSDVETSPYLSESYEEMTEAFNKIIELVELESTIRSLVSELRKTQRLINSIDNYILPFYRGSIKFIKQILEDRQREEFSRLKIIRRILQRRRESGSG</sequence>
<proteinExistence type="inferred from homology"/>
<accession>C3NGV3</accession>
<gene>
    <name evidence="1" type="primary">atpD</name>
    <name type="ordered locus">YN1551_1268</name>
</gene>
<dbReference type="EMBL" id="CP001404">
    <property type="protein sequence ID" value="ACP48363.1"/>
    <property type="molecule type" value="Genomic_DNA"/>
</dbReference>
<dbReference type="RefSeq" id="WP_012717393.1">
    <property type="nucleotide sequence ID" value="NC_012623.1"/>
</dbReference>
<dbReference type="SMR" id="C3NGV3"/>
<dbReference type="GeneID" id="7810927"/>
<dbReference type="KEGG" id="sin:YN1551_1268"/>
<dbReference type="HOGENOM" id="CLU_069688_2_2_2"/>
<dbReference type="Proteomes" id="UP000006818">
    <property type="component" value="Chromosome"/>
</dbReference>
<dbReference type="GO" id="GO:0005886">
    <property type="term" value="C:plasma membrane"/>
    <property type="evidence" value="ECO:0007669"/>
    <property type="project" value="UniProtKB-SubCell"/>
</dbReference>
<dbReference type="GO" id="GO:0005524">
    <property type="term" value="F:ATP binding"/>
    <property type="evidence" value="ECO:0007669"/>
    <property type="project" value="UniProtKB-UniRule"/>
</dbReference>
<dbReference type="GO" id="GO:0046933">
    <property type="term" value="F:proton-transporting ATP synthase activity, rotational mechanism"/>
    <property type="evidence" value="ECO:0007669"/>
    <property type="project" value="UniProtKB-UniRule"/>
</dbReference>
<dbReference type="GO" id="GO:0046961">
    <property type="term" value="F:proton-transporting ATPase activity, rotational mechanism"/>
    <property type="evidence" value="ECO:0007669"/>
    <property type="project" value="InterPro"/>
</dbReference>
<dbReference type="GO" id="GO:0042777">
    <property type="term" value="P:proton motive force-driven plasma membrane ATP synthesis"/>
    <property type="evidence" value="ECO:0007669"/>
    <property type="project" value="UniProtKB-UniRule"/>
</dbReference>
<dbReference type="FunFam" id="1.10.287.3240:FF:000012">
    <property type="entry name" value="V-type ATP synthase subunit D"/>
    <property type="match status" value="1"/>
</dbReference>
<dbReference type="Gene3D" id="1.10.287.3240">
    <property type="match status" value="1"/>
</dbReference>
<dbReference type="HAMAP" id="MF_00271">
    <property type="entry name" value="ATP_synth_D_arch"/>
    <property type="match status" value="1"/>
</dbReference>
<dbReference type="InterPro" id="IPR002699">
    <property type="entry name" value="V_ATPase_D"/>
</dbReference>
<dbReference type="NCBIfam" id="NF001544">
    <property type="entry name" value="PRK00373.1-3"/>
    <property type="match status" value="1"/>
</dbReference>
<dbReference type="NCBIfam" id="TIGR00309">
    <property type="entry name" value="V_ATPase_subD"/>
    <property type="match status" value="1"/>
</dbReference>
<dbReference type="PANTHER" id="PTHR11671">
    <property type="entry name" value="V-TYPE ATP SYNTHASE SUBUNIT D"/>
    <property type="match status" value="1"/>
</dbReference>
<dbReference type="Pfam" id="PF01813">
    <property type="entry name" value="ATP-synt_D"/>
    <property type="match status" value="1"/>
</dbReference>
<feature type="chain" id="PRO_1000209795" description="A-type ATP synthase subunit D">
    <location>
        <begin position="1"/>
        <end position="213"/>
    </location>
</feature>
<keyword id="KW-0066">ATP synthesis</keyword>
<keyword id="KW-1003">Cell membrane</keyword>
<keyword id="KW-0375">Hydrogen ion transport</keyword>
<keyword id="KW-0406">Ion transport</keyword>
<keyword id="KW-0472">Membrane</keyword>
<keyword id="KW-0813">Transport</keyword>
<name>AATD_SACI1</name>